<sequence length="592" mass="66337">MHLYRTHTCGQLRASDTGSKVRLSGWVHRKRDHGGLIFIDLRDHYGLTQLVVSPSTPGFDLVEHVRAESVIRVDGEVVARSAETVNPNLPTGEIEVVVRQVEVLSEAAELPLPVFGEPEYPEDIRLKYRYLDLRRETLHRNIVLRSQVIQSIRRRMIDQGFLEFQTPILTASSPEGARDFLVPSRLHPTKFYALPQAPQQFKQLLMVSGFDRYFQIAPCFRDEDLRADRSLEFYQLDVEMSFVTQDDVFAAIEPVMHGVFTEFGEGKPVTPYPFPRIPYREAIAKYGSDKPDLRNPIEMQDVSEHFRGGGFGLFARILEDAKNAVWAIPGPKGGSRAFCDRMNSWAQGEGQPGLGYIFWSDDQGGWGGPIAKNLGPEKTDGLMKALGLGQGDAAFFVAGDPKVFYKFAGAARTKVGTDLKLIDEGRFEFCWIVDFPMFEWSDEEKKYDFSHNPFSMPQGELDALLNKEPGEIVAYQYDIVCNGHELCSGAIRNHRPDVMLKAFEIAGYGPEVVEEQFGGMLNAFRHGAPPHGGLAPGIDRIVMLLAGETAIREVIAFPLNQQGQDLLMNAPSEVSEKQLKELHIRLAPPIKA</sequence>
<accession>B4RCT1</accession>
<protein>
    <recommendedName>
        <fullName evidence="1">Aspartate--tRNA(Asp/Asn) ligase</fullName>
        <ecNumber evidence="1">6.1.1.23</ecNumber>
    </recommendedName>
    <alternativeName>
        <fullName evidence="1">Aspartyl-tRNA synthetase</fullName>
        <shortName evidence="1">AspRS</shortName>
    </alternativeName>
    <alternativeName>
        <fullName evidence="1">Non-discriminating aspartyl-tRNA synthetase</fullName>
        <shortName evidence="1">ND-AspRS</shortName>
    </alternativeName>
</protein>
<gene>
    <name evidence="1" type="primary">aspS</name>
    <name type="ordered locus">PHZ_c1857</name>
</gene>
<keyword id="KW-0030">Aminoacyl-tRNA synthetase</keyword>
<keyword id="KW-0067">ATP-binding</keyword>
<keyword id="KW-0963">Cytoplasm</keyword>
<keyword id="KW-0436">Ligase</keyword>
<keyword id="KW-0547">Nucleotide-binding</keyword>
<keyword id="KW-0648">Protein biosynthesis</keyword>
<keyword id="KW-1185">Reference proteome</keyword>
<evidence type="ECO:0000255" key="1">
    <source>
        <dbReference type="HAMAP-Rule" id="MF_00044"/>
    </source>
</evidence>
<proteinExistence type="inferred from homology"/>
<feature type="chain" id="PRO_1000091024" description="Aspartate--tRNA(Asp/Asn) ligase">
    <location>
        <begin position="1"/>
        <end position="592"/>
    </location>
</feature>
<feature type="region of interest" description="Aspartate" evidence="1">
    <location>
        <begin position="199"/>
        <end position="202"/>
    </location>
</feature>
<feature type="binding site" evidence="1">
    <location>
        <position position="175"/>
    </location>
    <ligand>
        <name>L-aspartate</name>
        <dbReference type="ChEBI" id="CHEBI:29991"/>
    </ligand>
</feature>
<feature type="binding site" evidence="1">
    <location>
        <begin position="221"/>
        <end position="223"/>
    </location>
    <ligand>
        <name>ATP</name>
        <dbReference type="ChEBI" id="CHEBI:30616"/>
    </ligand>
</feature>
<feature type="binding site" evidence="1">
    <location>
        <position position="221"/>
    </location>
    <ligand>
        <name>L-aspartate</name>
        <dbReference type="ChEBI" id="CHEBI:29991"/>
    </ligand>
</feature>
<feature type="binding site" evidence="1">
    <location>
        <position position="451"/>
    </location>
    <ligand>
        <name>L-aspartate</name>
        <dbReference type="ChEBI" id="CHEBI:29991"/>
    </ligand>
</feature>
<feature type="binding site" evidence="1">
    <location>
        <position position="485"/>
    </location>
    <ligand>
        <name>ATP</name>
        <dbReference type="ChEBI" id="CHEBI:30616"/>
    </ligand>
</feature>
<feature type="binding site" evidence="1">
    <location>
        <position position="492"/>
    </location>
    <ligand>
        <name>L-aspartate</name>
        <dbReference type="ChEBI" id="CHEBI:29991"/>
    </ligand>
</feature>
<feature type="binding site" evidence="1">
    <location>
        <begin position="537"/>
        <end position="540"/>
    </location>
    <ligand>
        <name>ATP</name>
        <dbReference type="ChEBI" id="CHEBI:30616"/>
    </ligand>
</feature>
<feature type="site" description="Important for tRNA non-discrimination" evidence="1">
    <location>
        <position position="33"/>
    </location>
</feature>
<dbReference type="EC" id="6.1.1.23" evidence="1"/>
<dbReference type="EMBL" id="CP000747">
    <property type="protein sequence ID" value="ACG78268.1"/>
    <property type="molecule type" value="Genomic_DNA"/>
</dbReference>
<dbReference type="RefSeq" id="WP_012522410.1">
    <property type="nucleotide sequence ID" value="NC_011144.1"/>
</dbReference>
<dbReference type="SMR" id="B4RCT1"/>
<dbReference type="STRING" id="450851.PHZ_c1857"/>
<dbReference type="KEGG" id="pzu:PHZ_c1857"/>
<dbReference type="eggNOG" id="COG0173">
    <property type="taxonomic scope" value="Bacteria"/>
</dbReference>
<dbReference type="HOGENOM" id="CLU_014330_3_2_5"/>
<dbReference type="OrthoDB" id="9802326at2"/>
<dbReference type="Proteomes" id="UP000001868">
    <property type="component" value="Chromosome"/>
</dbReference>
<dbReference type="GO" id="GO:0005737">
    <property type="term" value="C:cytoplasm"/>
    <property type="evidence" value="ECO:0007669"/>
    <property type="project" value="UniProtKB-SubCell"/>
</dbReference>
<dbReference type="GO" id="GO:0004815">
    <property type="term" value="F:aspartate-tRNA ligase activity"/>
    <property type="evidence" value="ECO:0007669"/>
    <property type="project" value="UniProtKB-UniRule"/>
</dbReference>
<dbReference type="GO" id="GO:0050560">
    <property type="term" value="F:aspartate-tRNA(Asn) ligase activity"/>
    <property type="evidence" value="ECO:0007669"/>
    <property type="project" value="UniProtKB-EC"/>
</dbReference>
<dbReference type="GO" id="GO:0005524">
    <property type="term" value="F:ATP binding"/>
    <property type="evidence" value="ECO:0007669"/>
    <property type="project" value="UniProtKB-UniRule"/>
</dbReference>
<dbReference type="GO" id="GO:0003676">
    <property type="term" value="F:nucleic acid binding"/>
    <property type="evidence" value="ECO:0007669"/>
    <property type="project" value="InterPro"/>
</dbReference>
<dbReference type="GO" id="GO:0006422">
    <property type="term" value="P:aspartyl-tRNA aminoacylation"/>
    <property type="evidence" value="ECO:0007669"/>
    <property type="project" value="UniProtKB-UniRule"/>
</dbReference>
<dbReference type="CDD" id="cd00777">
    <property type="entry name" value="AspRS_core"/>
    <property type="match status" value="1"/>
</dbReference>
<dbReference type="CDD" id="cd04317">
    <property type="entry name" value="EcAspRS_like_N"/>
    <property type="match status" value="1"/>
</dbReference>
<dbReference type="Gene3D" id="3.30.930.10">
    <property type="entry name" value="Bira Bifunctional Protein, Domain 2"/>
    <property type="match status" value="1"/>
</dbReference>
<dbReference type="Gene3D" id="3.30.1360.30">
    <property type="entry name" value="GAD-like domain"/>
    <property type="match status" value="1"/>
</dbReference>
<dbReference type="Gene3D" id="2.40.50.140">
    <property type="entry name" value="Nucleic acid-binding proteins"/>
    <property type="match status" value="1"/>
</dbReference>
<dbReference type="HAMAP" id="MF_00044">
    <property type="entry name" value="Asp_tRNA_synth_type1"/>
    <property type="match status" value="1"/>
</dbReference>
<dbReference type="InterPro" id="IPR004364">
    <property type="entry name" value="Aa-tRNA-synt_II"/>
</dbReference>
<dbReference type="InterPro" id="IPR006195">
    <property type="entry name" value="aa-tRNA-synth_II"/>
</dbReference>
<dbReference type="InterPro" id="IPR045864">
    <property type="entry name" value="aa-tRNA-synth_II/BPL/LPL"/>
</dbReference>
<dbReference type="InterPro" id="IPR004524">
    <property type="entry name" value="Asp-tRNA-ligase_1"/>
</dbReference>
<dbReference type="InterPro" id="IPR047089">
    <property type="entry name" value="Asp-tRNA-ligase_1_N"/>
</dbReference>
<dbReference type="InterPro" id="IPR002312">
    <property type="entry name" value="Asp/Asn-tRNA-synth_IIb"/>
</dbReference>
<dbReference type="InterPro" id="IPR047090">
    <property type="entry name" value="AspRS_core"/>
</dbReference>
<dbReference type="InterPro" id="IPR004115">
    <property type="entry name" value="GAD-like_sf"/>
</dbReference>
<dbReference type="InterPro" id="IPR029351">
    <property type="entry name" value="GAD_dom"/>
</dbReference>
<dbReference type="InterPro" id="IPR012340">
    <property type="entry name" value="NA-bd_OB-fold"/>
</dbReference>
<dbReference type="InterPro" id="IPR004365">
    <property type="entry name" value="NA-bd_OB_tRNA"/>
</dbReference>
<dbReference type="NCBIfam" id="TIGR00459">
    <property type="entry name" value="aspS_bact"/>
    <property type="match status" value="1"/>
</dbReference>
<dbReference type="NCBIfam" id="NF001750">
    <property type="entry name" value="PRK00476.1"/>
    <property type="match status" value="1"/>
</dbReference>
<dbReference type="PANTHER" id="PTHR22594:SF5">
    <property type="entry name" value="ASPARTATE--TRNA LIGASE, MITOCHONDRIAL"/>
    <property type="match status" value="1"/>
</dbReference>
<dbReference type="PANTHER" id="PTHR22594">
    <property type="entry name" value="ASPARTYL/LYSYL-TRNA SYNTHETASE"/>
    <property type="match status" value="1"/>
</dbReference>
<dbReference type="Pfam" id="PF02938">
    <property type="entry name" value="GAD"/>
    <property type="match status" value="1"/>
</dbReference>
<dbReference type="Pfam" id="PF00152">
    <property type="entry name" value="tRNA-synt_2"/>
    <property type="match status" value="1"/>
</dbReference>
<dbReference type="Pfam" id="PF01336">
    <property type="entry name" value="tRNA_anti-codon"/>
    <property type="match status" value="1"/>
</dbReference>
<dbReference type="PRINTS" id="PR01042">
    <property type="entry name" value="TRNASYNTHASP"/>
</dbReference>
<dbReference type="SUPFAM" id="SSF55681">
    <property type="entry name" value="Class II aaRS and biotin synthetases"/>
    <property type="match status" value="1"/>
</dbReference>
<dbReference type="SUPFAM" id="SSF55261">
    <property type="entry name" value="GAD domain-like"/>
    <property type="match status" value="1"/>
</dbReference>
<dbReference type="SUPFAM" id="SSF50249">
    <property type="entry name" value="Nucleic acid-binding proteins"/>
    <property type="match status" value="1"/>
</dbReference>
<dbReference type="PROSITE" id="PS50862">
    <property type="entry name" value="AA_TRNA_LIGASE_II"/>
    <property type="match status" value="1"/>
</dbReference>
<comment type="function">
    <text evidence="1">Aspartyl-tRNA synthetase with relaxed tRNA specificity since it is able to aspartylate not only its cognate tRNA(Asp) but also tRNA(Asn). Reaction proceeds in two steps: L-aspartate is first activated by ATP to form Asp-AMP and then transferred to the acceptor end of tRNA(Asp/Asn).</text>
</comment>
<comment type="catalytic activity">
    <reaction evidence="1">
        <text>tRNA(Asx) + L-aspartate + ATP = L-aspartyl-tRNA(Asx) + AMP + diphosphate</text>
        <dbReference type="Rhea" id="RHEA:18349"/>
        <dbReference type="Rhea" id="RHEA-COMP:9710"/>
        <dbReference type="Rhea" id="RHEA-COMP:9711"/>
        <dbReference type="ChEBI" id="CHEBI:29991"/>
        <dbReference type="ChEBI" id="CHEBI:30616"/>
        <dbReference type="ChEBI" id="CHEBI:33019"/>
        <dbReference type="ChEBI" id="CHEBI:78442"/>
        <dbReference type="ChEBI" id="CHEBI:78516"/>
        <dbReference type="ChEBI" id="CHEBI:456215"/>
        <dbReference type="EC" id="6.1.1.23"/>
    </reaction>
</comment>
<comment type="subunit">
    <text evidence="1">Homodimer.</text>
</comment>
<comment type="subcellular location">
    <subcellularLocation>
        <location evidence="1">Cytoplasm</location>
    </subcellularLocation>
</comment>
<comment type="similarity">
    <text evidence="1">Belongs to the class-II aminoacyl-tRNA synthetase family. Type 1 subfamily.</text>
</comment>
<name>SYDND_PHEZH</name>
<organism>
    <name type="scientific">Phenylobacterium zucineum (strain HLK1)</name>
    <dbReference type="NCBI Taxonomy" id="450851"/>
    <lineage>
        <taxon>Bacteria</taxon>
        <taxon>Pseudomonadati</taxon>
        <taxon>Pseudomonadota</taxon>
        <taxon>Alphaproteobacteria</taxon>
        <taxon>Caulobacterales</taxon>
        <taxon>Caulobacteraceae</taxon>
        <taxon>Phenylobacterium</taxon>
    </lineage>
</organism>
<reference key="1">
    <citation type="journal article" date="2008" name="BMC Genomics">
        <title>Complete genome of Phenylobacterium zucineum - a novel facultative intracellular bacterium isolated from human erythroleukemia cell line K562.</title>
        <authorList>
            <person name="Luo Y."/>
            <person name="Xu X."/>
            <person name="Ding Z."/>
            <person name="Liu Z."/>
            <person name="Zhang B."/>
            <person name="Yan Z."/>
            <person name="Sun J."/>
            <person name="Hu S."/>
            <person name="Hu X."/>
        </authorList>
    </citation>
    <scope>NUCLEOTIDE SEQUENCE [LARGE SCALE GENOMIC DNA]</scope>
    <source>
        <strain>HLK1</strain>
    </source>
</reference>